<proteinExistence type="evidence at protein level"/>
<organism evidence="5">
    <name type="scientific">Caenorhabditis elegans</name>
    <dbReference type="NCBI Taxonomy" id="6239"/>
    <lineage>
        <taxon>Eukaryota</taxon>
        <taxon>Metazoa</taxon>
        <taxon>Ecdysozoa</taxon>
        <taxon>Nematoda</taxon>
        <taxon>Chromadorea</taxon>
        <taxon>Rhabditida</taxon>
        <taxon>Rhabditina</taxon>
        <taxon>Rhabditomorpha</taxon>
        <taxon>Rhabditoidea</taxon>
        <taxon>Rhabditidae</taxon>
        <taxon>Peloderinae</taxon>
        <taxon>Caenorhabditis</taxon>
    </lineage>
</organism>
<name>SAO1_CAEEL</name>
<sequence length="245" mass="27532">MHKNGNNGPVIDTKWHYLGPDSEKYGPYMSKDMLFWLQAGYFNDGLQLKTENEPNYHTLGEWSQLLGTHPFSMPVHSLDATIAQMNSMRPHGAMMMVPPGLQNQFQPPMPMRFPPFLPMPLLHQMNQNGPPMGAQMHSQPPSEPIDAGSLSHTPDSENETRLNEQTLQQPPSWLIALGLAGHGRKPHHHQQILAHQHIPQMQHANVATDQVVMKSVECQTEPVEISKEQASRVLSELLGQMVIIN</sequence>
<feature type="chain" id="PRO_0000433780" description="Suppressor of aph-1" evidence="4">
    <location>
        <begin position="1"/>
        <end position="245"/>
    </location>
</feature>
<feature type="domain" description="GYF" evidence="1">
    <location>
        <begin position="12"/>
        <end position="60"/>
    </location>
</feature>
<feature type="region of interest" description="Disordered" evidence="2">
    <location>
        <begin position="126"/>
        <end position="166"/>
    </location>
</feature>
<feature type="splice variant" id="VSP_057839" description="In isoform a." evidence="4">
    <location>
        <begin position="160"/>
        <end position="180"/>
    </location>
</feature>
<feature type="splice variant" id="VSP_057840" description="In isoform b and isoform d." evidence="4">
    <original>TRLNEQTLQQPPSWLIALGLA</original>
    <variation>FQ</variation>
    <location>
        <begin position="160"/>
        <end position="180"/>
    </location>
</feature>
<feature type="splice variant" id="VSP_057841" description="In isoform d." evidence="4">
    <original>E</original>
    <variation>EFQ</variation>
    <location>
        <position position="224"/>
    </location>
</feature>
<feature type="mutagenesis site" description="In ik1; temperature-sensitive mutant with low incidence of embryonic lethality." evidence="3">
    <original>L</original>
    <variation>F</variation>
    <location>
        <position position="59"/>
    </location>
</feature>
<feature type="strand" evidence="10">
    <location>
        <begin position="201"/>
        <end position="207"/>
    </location>
</feature>
<feature type="strand" evidence="10">
    <location>
        <begin position="213"/>
        <end position="219"/>
    </location>
</feature>
<comment type="function">
    <text evidence="3">Involved in negative regulation of early and late embryonic Notch signaling.</text>
</comment>
<comment type="interaction">
    <interactant intactId="EBI-323135">
        <id>C6KRN1</id>
    </interactant>
    <interactant intactId="EBI-328324">
        <id>Q22799</id>
        <label>dlc-1</label>
    </interactant>
    <organismsDiffer>false</organismsDiffer>
    <experiments>4</experiments>
</comment>
<comment type="alternative products">
    <event type="alternative splicing"/>
    <isoform>
        <id>C6KRN1-1</id>
        <name evidence="8">c</name>
        <sequence type="displayed"/>
    </isoform>
    <isoform>
        <id>C6KRN1-2</id>
        <name evidence="6">a</name>
        <sequence type="described" ref="VSP_057839"/>
    </isoform>
    <isoform>
        <id>C6KRN1-3</id>
        <name evidence="7">b</name>
        <sequence type="described" ref="VSP_057840"/>
    </isoform>
    <isoform>
        <id>C6KRN1-4</id>
        <name evidence="9">d</name>
        <sequence type="described" ref="VSP_057840 VSP_057841"/>
    </isoform>
</comment>
<comment type="disruption phenotype">
    <text evidence="3">Partially penetrant phenotypes when temperature elevated to 25 degrees Celsius which include embryonic lethality, reduced brood size, egg retention and an increased incidence of males.</text>
</comment>
<evidence type="ECO:0000255" key="1">
    <source>
        <dbReference type="PROSITE-ProRule" id="PRU00101"/>
    </source>
</evidence>
<evidence type="ECO:0000256" key="2">
    <source>
        <dbReference type="SAM" id="MobiDB-lite"/>
    </source>
</evidence>
<evidence type="ECO:0000269" key="3">
    <source>
    </source>
</evidence>
<evidence type="ECO:0000305" key="4"/>
<evidence type="ECO:0000312" key="5">
    <source>
        <dbReference type="Proteomes" id="UP000001940"/>
    </source>
</evidence>
<evidence type="ECO:0000312" key="6">
    <source>
        <dbReference type="WormBase" id="R10D12.14a"/>
    </source>
</evidence>
<evidence type="ECO:0000312" key="7">
    <source>
        <dbReference type="WormBase" id="R10D12.14b"/>
    </source>
</evidence>
<evidence type="ECO:0000312" key="8">
    <source>
        <dbReference type="WormBase" id="R10D12.14c"/>
    </source>
</evidence>
<evidence type="ECO:0000312" key="9">
    <source>
        <dbReference type="WormBase" id="R10D12.14d"/>
    </source>
</evidence>
<evidence type="ECO:0007829" key="10">
    <source>
        <dbReference type="PDB" id="7Y8W"/>
    </source>
</evidence>
<gene>
    <name evidence="8" type="primary">sao-1</name>
    <name evidence="8" type="ORF">R10D12.14</name>
</gene>
<dbReference type="EMBL" id="Z81109">
    <property type="protein sequence ID" value="CAJ85777.1"/>
    <property type="molecule type" value="Genomic_DNA"/>
</dbReference>
<dbReference type="EMBL" id="Z81109">
    <property type="protein sequence ID" value="CAJ85778.1"/>
    <property type="molecule type" value="Genomic_DNA"/>
</dbReference>
<dbReference type="EMBL" id="Z81109">
    <property type="protein sequence ID" value="CAZ65518.1"/>
    <property type="molecule type" value="Genomic_DNA"/>
</dbReference>
<dbReference type="EMBL" id="Z81109">
    <property type="protein sequence ID" value="CAZ65519.1"/>
    <property type="molecule type" value="Genomic_DNA"/>
</dbReference>
<dbReference type="RefSeq" id="NP_001041150.1">
    <property type="nucleotide sequence ID" value="NM_001047685.1"/>
</dbReference>
<dbReference type="RefSeq" id="NP_001041151.1">
    <molecule id="C6KRN1-3"/>
    <property type="nucleotide sequence ID" value="NM_001047686.4"/>
</dbReference>
<dbReference type="RefSeq" id="NP_001256550.1">
    <molecule id="C6KRN1-1"/>
    <property type="nucleotide sequence ID" value="NM_001269621.3"/>
</dbReference>
<dbReference type="RefSeq" id="NP_001256551.1">
    <molecule id="C6KRN1-4"/>
    <property type="nucleotide sequence ID" value="NM_001269622.3"/>
</dbReference>
<dbReference type="RefSeq" id="NP_001379456.1">
    <molecule id="C6KRN1-2"/>
    <property type="nucleotide sequence ID" value="NM_001392643.1"/>
</dbReference>
<dbReference type="PDB" id="7Y8W">
    <property type="method" value="X-ray"/>
    <property type="resolution" value="2.40 A"/>
    <property type="chains" value="E/F/K/L/O/P/S/T=201-224"/>
</dbReference>
<dbReference type="PDBsum" id="7Y8W"/>
<dbReference type="SMR" id="C6KRN1"/>
<dbReference type="FunCoup" id="C6KRN1">
    <property type="interactions" value="234"/>
</dbReference>
<dbReference type="IntAct" id="C6KRN1">
    <property type="interactions" value="3"/>
</dbReference>
<dbReference type="MINT" id="C6KRN1"/>
<dbReference type="STRING" id="6239.R10D12.14c.1"/>
<dbReference type="PaxDb" id="6239-R10D12.14c"/>
<dbReference type="PeptideAtlas" id="C6KRN1"/>
<dbReference type="EnsemblMetazoa" id="R10D12.14a.1">
    <molecule id="C6KRN1-2"/>
    <property type="protein sequence ID" value="R10D12.14a.1"/>
    <property type="gene ID" value="WBGene00011195"/>
</dbReference>
<dbReference type="EnsemblMetazoa" id="R10D12.14b.1">
    <molecule id="C6KRN1-3"/>
    <property type="protein sequence ID" value="R10D12.14b.1"/>
    <property type="gene ID" value="WBGene00011195"/>
</dbReference>
<dbReference type="EnsemblMetazoa" id="R10D12.14c.1">
    <molecule id="C6KRN1-1"/>
    <property type="protein sequence ID" value="R10D12.14c.1"/>
    <property type="gene ID" value="WBGene00011195"/>
</dbReference>
<dbReference type="EnsemblMetazoa" id="R10D12.14d.1">
    <molecule id="C6KRN1-4"/>
    <property type="protein sequence ID" value="R10D12.14d.1"/>
    <property type="gene ID" value="WBGene00011195"/>
</dbReference>
<dbReference type="GeneID" id="3565237"/>
<dbReference type="KEGG" id="cel:CELE_R10D12.14"/>
<dbReference type="UCSC" id="R10D12.14b">
    <property type="organism name" value="c. elegans"/>
</dbReference>
<dbReference type="AGR" id="WB:WBGene00011195"/>
<dbReference type="CTD" id="3565237"/>
<dbReference type="WormBase" id="R10D12.14a">
    <molecule id="C6KRN1-2"/>
    <property type="protein sequence ID" value="CE40107"/>
    <property type="gene ID" value="WBGene00011195"/>
    <property type="gene designation" value="sao-1"/>
</dbReference>
<dbReference type="WormBase" id="R10D12.14b">
    <molecule id="C6KRN1-3"/>
    <property type="protein sequence ID" value="CE40108"/>
    <property type="gene ID" value="WBGene00011195"/>
    <property type="gene designation" value="sao-1"/>
</dbReference>
<dbReference type="WormBase" id="R10D12.14c">
    <molecule id="C6KRN1-1"/>
    <property type="protein sequence ID" value="CE12698"/>
    <property type="gene ID" value="WBGene00011195"/>
    <property type="gene designation" value="sao-1"/>
</dbReference>
<dbReference type="WormBase" id="R10D12.14d">
    <molecule id="C6KRN1-4"/>
    <property type="protein sequence ID" value="CE43865"/>
    <property type="gene ID" value="WBGene00011195"/>
    <property type="gene designation" value="sao-1"/>
</dbReference>
<dbReference type="eggNOG" id="KOG1862">
    <property type="taxonomic scope" value="Eukaryota"/>
</dbReference>
<dbReference type="HOGENOM" id="CLU_078058_0_0_1"/>
<dbReference type="InParanoid" id="C6KRN1"/>
<dbReference type="OMA" id="PKWFYQG"/>
<dbReference type="OrthoDB" id="48509at2759"/>
<dbReference type="SignaLink" id="C6KRN1"/>
<dbReference type="PRO" id="PR:C6KRN1"/>
<dbReference type="Proteomes" id="UP000001940">
    <property type="component" value="Chromosome V"/>
</dbReference>
<dbReference type="Bgee" id="WBGene00011195">
    <property type="expression patterns" value="Expressed in adult organism and 3 other cell types or tissues"/>
</dbReference>
<dbReference type="ExpressionAtlas" id="C6KRN1">
    <property type="expression patterns" value="baseline and differential"/>
</dbReference>
<dbReference type="GO" id="GO:0005938">
    <property type="term" value="C:cell cortex"/>
    <property type="evidence" value="ECO:0000314"/>
    <property type="project" value="WormBase"/>
</dbReference>
<dbReference type="GO" id="GO:0032154">
    <property type="term" value="C:cleavage furrow"/>
    <property type="evidence" value="ECO:0000314"/>
    <property type="project" value="WormBase"/>
</dbReference>
<dbReference type="GO" id="GO:0005737">
    <property type="term" value="C:cytoplasm"/>
    <property type="evidence" value="ECO:0000314"/>
    <property type="project" value="WormBase"/>
</dbReference>
<dbReference type="GO" id="GO:0071987">
    <property type="term" value="F:WD40-repeat domain binding"/>
    <property type="evidence" value="ECO:0000353"/>
    <property type="project" value="WormBase"/>
</dbReference>
<dbReference type="GO" id="GO:0045746">
    <property type="term" value="P:negative regulation of Notch signaling pathway"/>
    <property type="evidence" value="ECO:0000316"/>
    <property type="project" value="WormBase"/>
</dbReference>
<dbReference type="GO" id="GO:0007219">
    <property type="term" value="P:Notch signaling pathway"/>
    <property type="evidence" value="ECO:0007669"/>
    <property type="project" value="UniProtKB-KW"/>
</dbReference>
<dbReference type="GO" id="GO:0060625">
    <property type="term" value="P:regulation of protein deneddylation"/>
    <property type="evidence" value="ECO:0000316"/>
    <property type="project" value="WormBase"/>
</dbReference>
<dbReference type="CDD" id="cd00072">
    <property type="entry name" value="GYF"/>
    <property type="match status" value="1"/>
</dbReference>
<dbReference type="Gene3D" id="3.30.1490.40">
    <property type="match status" value="1"/>
</dbReference>
<dbReference type="InterPro" id="IPR003169">
    <property type="entry name" value="GYF"/>
</dbReference>
<dbReference type="InterPro" id="IPR035445">
    <property type="entry name" value="GYF-like_dom_sf"/>
</dbReference>
<dbReference type="Pfam" id="PF02213">
    <property type="entry name" value="GYF"/>
    <property type="match status" value="1"/>
</dbReference>
<dbReference type="SMART" id="SM00444">
    <property type="entry name" value="GYF"/>
    <property type="match status" value="1"/>
</dbReference>
<dbReference type="SUPFAM" id="SSF55277">
    <property type="entry name" value="GYF domain"/>
    <property type="match status" value="1"/>
</dbReference>
<dbReference type="PROSITE" id="PS50829">
    <property type="entry name" value="GYF"/>
    <property type="match status" value="1"/>
</dbReference>
<keyword id="KW-0002">3D-structure</keyword>
<keyword id="KW-0025">Alternative splicing</keyword>
<keyword id="KW-0217">Developmental protein</keyword>
<keyword id="KW-0914">Notch signaling pathway</keyword>
<keyword id="KW-1185">Reference proteome</keyword>
<accession>C6KRN1</accession>
<accession>C6KRN2</accession>
<accession>Q1ZXT3</accession>
<accession>Q1ZXT4</accession>
<reference evidence="5" key="1">
    <citation type="journal article" date="1998" name="Science">
        <title>Genome sequence of the nematode C. elegans: a platform for investigating biology.</title>
        <authorList>
            <consortium name="The C. elegans sequencing consortium"/>
        </authorList>
    </citation>
    <scope>NUCLEOTIDE SEQUENCE [LARGE SCALE GENOMIC DNA]</scope>
    <source>
        <strain evidence="5">Bristol N2</strain>
    </source>
</reference>
<reference evidence="4" key="2">
    <citation type="journal article" date="2012" name="Genetics">
        <title>Notch signaling is antagonized by SAO-1, a novel GYF-domain protein that interacts with the E3 ubiquitin ligase SEL-10 in Caenorhabditis elegans.</title>
        <authorList>
            <person name="Hale V.A."/>
            <person name="Guiney E.L."/>
            <person name="Goldberg L.Y."/>
            <person name="Haduong J.H."/>
            <person name="Kwartler C.S."/>
            <person name="Scangos K.W."/>
            <person name="Goutte C."/>
        </authorList>
    </citation>
    <scope>FUNCTION</scope>
    <scope>DISRUPTION PHENOTYPE</scope>
    <scope>MUTAGENESIS OF LEU-59</scope>
</reference>
<protein>
    <recommendedName>
        <fullName evidence="8">Suppressor of aph-1</fullName>
    </recommendedName>
</protein>